<dbReference type="EMBL" id="AE003849">
    <property type="protein sequence ID" value="AAF83549.1"/>
    <property type="molecule type" value="Genomic_DNA"/>
</dbReference>
<dbReference type="PIR" id="H82766">
    <property type="entry name" value="H82766"/>
</dbReference>
<dbReference type="RefSeq" id="WP_004090402.1">
    <property type="nucleotide sequence ID" value="NC_002488.3"/>
</dbReference>
<dbReference type="SMR" id="P66284"/>
<dbReference type="STRING" id="160492.XF_0739"/>
<dbReference type="GeneID" id="93905774"/>
<dbReference type="KEGG" id="xfa:XF_0739"/>
<dbReference type="eggNOG" id="COG0291">
    <property type="taxonomic scope" value="Bacteria"/>
</dbReference>
<dbReference type="HOGENOM" id="CLU_169643_4_3_6"/>
<dbReference type="Proteomes" id="UP000000812">
    <property type="component" value="Chromosome"/>
</dbReference>
<dbReference type="GO" id="GO:0022625">
    <property type="term" value="C:cytosolic large ribosomal subunit"/>
    <property type="evidence" value="ECO:0007669"/>
    <property type="project" value="TreeGrafter"/>
</dbReference>
<dbReference type="GO" id="GO:0003735">
    <property type="term" value="F:structural constituent of ribosome"/>
    <property type="evidence" value="ECO:0007669"/>
    <property type="project" value="InterPro"/>
</dbReference>
<dbReference type="GO" id="GO:0006412">
    <property type="term" value="P:translation"/>
    <property type="evidence" value="ECO:0007669"/>
    <property type="project" value="UniProtKB-UniRule"/>
</dbReference>
<dbReference type="FunFam" id="4.10.410.60:FF:000001">
    <property type="entry name" value="50S ribosomal protein L35"/>
    <property type="match status" value="1"/>
</dbReference>
<dbReference type="Gene3D" id="4.10.410.60">
    <property type="match status" value="1"/>
</dbReference>
<dbReference type="HAMAP" id="MF_00514">
    <property type="entry name" value="Ribosomal_bL35"/>
    <property type="match status" value="1"/>
</dbReference>
<dbReference type="InterPro" id="IPR001706">
    <property type="entry name" value="Ribosomal_bL35"/>
</dbReference>
<dbReference type="InterPro" id="IPR021137">
    <property type="entry name" value="Ribosomal_bL35-like"/>
</dbReference>
<dbReference type="InterPro" id="IPR018265">
    <property type="entry name" value="Ribosomal_bL35_CS"/>
</dbReference>
<dbReference type="InterPro" id="IPR037229">
    <property type="entry name" value="Ribosomal_bL35_sf"/>
</dbReference>
<dbReference type="NCBIfam" id="TIGR00001">
    <property type="entry name" value="rpmI_bact"/>
    <property type="match status" value="1"/>
</dbReference>
<dbReference type="PANTHER" id="PTHR33343">
    <property type="entry name" value="54S RIBOSOMAL PROTEIN BL35M"/>
    <property type="match status" value="1"/>
</dbReference>
<dbReference type="PANTHER" id="PTHR33343:SF1">
    <property type="entry name" value="LARGE RIBOSOMAL SUBUNIT PROTEIN BL35M"/>
    <property type="match status" value="1"/>
</dbReference>
<dbReference type="Pfam" id="PF01632">
    <property type="entry name" value="Ribosomal_L35p"/>
    <property type="match status" value="1"/>
</dbReference>
<dbReference type="PRINTS" id="PR00064">
    <property type="entry name" value="RIBOSOMALL35"/>
</dbReference>
<dbReference type="SUPFAM" id="SSF143034">
    <property type="entry name" value="L35p-like"/>
    <property type="match status" value="1"/>
</dbReference>
<dbReference type="PROSITE" id="PS00936">
    <property type="entry name" value="RIBOSOMAL_L35"/>
    <property type="match status" value="1"/>
</dbReference>
<reference key="1">
    <citation type="journal article" date="2000" name="Nature">
        <title>The genome sequence of the plant pathogen Xylella fastidiosa.</title>
        <authorList>
            <person name="Simpson A.J.G."/>
            <person name="Reinach F.C."/>
            <person name="Arruda P."/>
            <person name="Abreu F.A."/>
            <person name="Acencio M."/>
            <person name="Alvarenga R."/>
            <person name="Alves L.M.C."/>
            <person name="Araya J.E."/>
            <person name="Baia G.S."/>
            <person name="Baptista C.S."/>
            <person name="Barros M.H."/>
            <person name="Bonaccorsi E.D."/>
            <person name="Bordin S."/>
            <person name="Bove J.M."/>
            <person name="Briones M.R.S."/>
            <person name="Bueno M.R.P."/>
            <person name="Camargo A.A."/>
            <person name="Camargo L.E.A."/>
            <person name="Carraro D.M."/>
            <person name="Carrer H."/>
            <person name="Colauto N.B."/>
            <person name="Colombo C."/>
            <person name="Costa F.F."/>
            <person name="Costa M.C.R."/>
            <person name="Costa-Neto C.M."/>
            <person name="Coutinho L.L."/>
            <person name="Cristofani M."/>
            <person name="Dias-Neto E."/>
            <person name="Docena C."/>
            <person name="El-Dorry H."/>
            <person name="Facincani A.P."/>
            <person name="Ferreira A.J.S."/>
            <person name="Ferreira V.C.A."/>
            <person name="Ferro J.A."/>
            <person name="Fraga J.S."/>
            <person name="Franca S.C."/>
            <person name="Franco M.C."/>
            <person name="Frohme M."/>
            <person name="Furlan L.R."/>
            <person name="Garnier M."/>
            <person name="Goldman G.H."/>
            <person name="Goldman M.H.S."/>
            <person name="Gomes S.L."/>
            <person name="Gruber A."/>
            <person name="Ho P.L."/>
            <person name="Hoheisel J.D."/>
            <person name="Junqueira M.L."/>
            <person name="Kemper E.L."/>
            <person name="Kitajima J.P."/>
            <person name="Krieger J.E."/>
            <person name="Kuramae E.E."/>
            <person name="Laigret F."/>
            <person name="Lambais M.R."/>
            <person name="Leite L.C.C."/>
            <person name="Lemos E.G.M."/>
            <person name="Lemos M.V.F."/>
            <person name="Lopes S.A."/>
            <person name="Lopes C.R."/>
            <person name="Machado J.A."/>
            <person name="Machado M.A."/>
            <person name="Madeira A.M.B.N."/>
            <person name="Madeira H.M.F."/>
            <person name="Marino C.L."/>
            <person name="Marques M.V."/>
            <person name="Martins E.A.L."/>
            <person name="Martins E.M.F."/>
            <person name="Matsukuma A.Y."/>
            <person name="Menck C.F.M."/>
            <person name="Miracca E.C."/>
            <person name="Miyaki C.Y."/>
            <person name="Monteiro-Vitorello C.B."/>
            <person name="Moon D.H."/>
            <person name="Nagai M.A."/>
            <person name="Nascimento A.L.T.O."/>
            <person name="Netto L.E.S."/>
            <person name="Nhani A. Jr."/>
            <person name="Nobrega F.G."/>
            <person name="Nunes L.R."/>
            <person name="Oliveira M.A."/>
            <person name="de Oliveira M.C."/>
            <person name="de Oliveira R.C."/>
            <person name="Palmieri D.A."/>
            <person name="Paris A."/>
            <person name="Peixoto B.R."/>
            <person name="Pereira G.A.G."/>
            <person name="Pereira H.A. Jr."/>
            <person name="Pesquero J.B."/>
            <person name="Quaggio R.B."/>
            <person name="Roberto P.G."/>
            <person name="Rodrigues V."/>
            <person name="de Rosa A.J.M."/>
            <person name="de Rosa V.E. Jr."/>
            <person name="de Sa R.G."/>
            <person name="Santelli R.V."/>
            <person name="Sawasaki H.E."/>
            <person name="da Silva A.C.R."/>
            <person name="da Silva A.M."/>
            <person name="da Silva F.R."/>
            <person name="Silva W.A. Jr."/>
            <person name="da Silveira J.F."/>
            <person name="Silvestri M.L.Z."/>
            <person name="Siqueira W.J."/>
            <person name="de Souza A.A."/>
            <person name="de Souza A.P."/>
            <person name="Terenzi M.F."/>
            <person name="Truffi D."/>
            <person name="Tsai S.M."/>
            <person name="Tsuhako M.H."/>
            <person name="Vallada H."/>
            <person name="Van Sluys M.A."/>
            <person name="Verjovski-Almeida S."/>
            <person name="Vettore A.L."/>
            <person name="Zago M.A."/>
            <person name="Zatz M."/>
            <person name="Meidanis J."/>
            <person name="Setubal J.C."/>
        </authorList>
    </citation>
    <scope>NUCLEOTIDE SEQUENCE [LARGE SCALE GENOMIC DNA]</scope>
    <source>
        <strain>9a5c</strain>
    </source>
</reference>
<accession>P66284</accession>
<accession>Q9PFD9</accession>
<proteinExistence type="inferred from homology"/>
<keyword id="KW-0687">Ribonucleoprotein</keyword>
<keyword id="KW-0689">Ribosomal protein</keyword>
<sequence>MPKIKTNRAAAKRFRKTASGKYKAGHANRSHILTKKATKRKRNLRQQNHVRAEDAGRLDRMLPYL</sequence>
<evidence type="ECO:0000255" key="1">
    <source>
        <dbReference type="HAMAP-Rule" id="MF_00514"/>
    </source>
</evidence>
<evidence type="ECO:0000256" key="2">
    <source>
        <dbReference type="SAM" id="MobiDB-lite"/>
    </source>
</evidence>
<evidence type="ECO:0000305" key="3"/>
<feature type="chain" id="PRO_0000177461" description="Large ribosomal subunit protein bL35">
    <location>
        <begin position="1"/>
        <end position="65"/>
    </location>
</feature>
<feature type="region of interest" description="Disordered" evidence="2">
    <location>
        <begin position="1"/>
        <end position="65"/>
    </location>
</feature>
<feature type="compositionally biased region" description="Basic residues" evidence="2">
    <location>
        <begin position="10"/>
        <end position="44"/>
    </location>
</feature>
<feature type="compositionally biased region" description="Basic and acidic residues" evidence="2">
    <location>
        <begin position="50"/>
        <end position="65"/>
    </location>
</feature>
<comment type="similarity">
    <text evidence="1">Belongs to the bacterial ribosomal protein bL35 family.</text>
</comment>
<name>RL35_XYLFA</name>
<gene>
    <name evidence="1" type="primary">rpmI</name>
    <name type="ordered locus">XF_0739</name>
</gene>
<organism>
    <name type="scientific">Xylella fastidiosa (strain 9a5c)</name>
    <dbReference type="NCBI Taxonomy" id="160492"/>
    <lineage>
        <taxon>Bacteria</taxon>
        <taxon>Pseudomonadati</taxon>
        <taxon>Pseudomonadota</taxon>
        <taxon>Gammaproteobacteria</taxon>
        <taxon>Lysobacterales</taxon>
        <taxon>Lysobacteraceae</taxon>
        <taxon>Xylella</taxon>
    </lineage>
</organism>
<protein>
    <recommendedName>
        <fullName evidence="1">Large ribosomal subunit protein bL35</fullName>
    </recommendedName>
    <alternativeName>
        <fullName evidence="3">50S ribosomal protein L35</fullName>
    </alternativeName>
</protein>